<organism>
    <name type="scientific">Rhodopseudomonas palustris (strain TIE-1)</name>
    <dbReference type="NCBI Taxonomy" id="395960"/>
    <lineage>
        <taxon>Bacteria</taxon>
        <taxon>Pseudomonadati</taxon>
        <taxon>Pseudomonadota</taxon>
        <taxon>Alphaproteobacteria</taxon>
        <taxon>Hyphomicrobiales</taxon>
        <taxon>Nitrobacteraceae</taxon>
        <taxon>Rhodopseudomonas</taxon>
    </lineage>
</organism>
<reference key="1">
    <citation type="submission" date="2008-05" db="EMBL/GenBank/DDBJ databases">
        <title>Complete sequence of Rhodopseudomonas palustris TIE-1.</title>
        <authorList>
            <consortium name="US DOE Joint Genome Institute"/>
            <person name="Lucas S."/>
            <person name="Copeland A."/>
            <person name="Lapidus A."/>
            <person name="Glavina del Rio T."/>
            <person name="Dalin E."/>
            <person name="Tice H."/>
            <person name="Pitluck S."/>
            <person name="Chain P."/>
            <person name="Malfatti S."/>
            <person name="Shin M."/>
            <person name="Vergez L."/>
            <person name="Lang D."/>
            <person name="Schmutz J."/>
            <person name="Larimer F."/>
            <person name="Land M."/>
            <person name="Hauser L."/>
            <person name="Kyrpides N."/>
            <person name="Mikhailova N."/>
            <person name="Emerson D."/>
            <person name="Newman D.K."/>
            <person name="Roden E."/>
            <person name="Richardson P."/>
        </authorList>
    </citation>
    <scope>NUCLEOTIDE SEQUENCE [LARGE SCALE GENOMIC DNA]</scope>
    <source>
        <strain>TIE-1</strain>
    </source>
</reference>
<dbReference type="EMBL" id="CP001096">
    <property type="protein sequence ID" value="ACF00597.1"/>
    <property type="molecule type" value="Genomic_DNA"/>
</dbReference>
<dbReference type="RefSeq" id="WP_012495405.1">
    <property type="nucleotide sequence ID" value="NC_011004.1"/>
</dbReference>
<dbReference type="KEGG" id="rpt:Rpal_2074"/>
<dbReference type="HOGENOM" id="CLU_109769_0_1_5"/>
<dbReference type="OrthoDB" id="9786855at2"/>
<dbReference type="Proteomes" id="UP000001725">
    <property type="component" value="Chromosome"/>
</dbReference>
<dbReference type="HAMAP" id="MF_00676">
    <property type="entry name" value="UPF0260"/>
    <property type="match status" value="1"/>
</dbReference>
<dbReference type="InterPro" id="IPR005358">
    <property type="entry name" value="Puta_zinc/iron-chelating_dom"/>
</dbReference>
<dbReference type="InterPro" id="IPR008228">
    <property type="entry name" value="UCP006173"/>
</dbReference>
<dbReference type="NCBIfam" id="NF003501">
    <property type="entry name" value="PRK05170.1-5"/>
    <property type="match status" value="1"/>
</dbReference>
<dbReference type="NCBIfam" id="NF003507">
    <property type="entry name" value="PRK05170.2-5"/>
    <property type="match status" value="1"/>
</dbReference>
<dbReference type="PANTHER" id="PTHR37421">
    <property type="entry name" value="UPF0260 PROTEIN YCGN"/>
    <property type="match status" value="1"/>
</dbReference>
<dbReference type="PANTHER" id="PTHR37421:SF1">
    <property type="entry name" value="UPF0260 PROTEIN YCGN"/>
    <property type="match status" value="1"/>
</dbReference>
<dbReference type="Pfam" id="PF03692">
    <property type="entry name" value="CxxCxxCC"/>
    <property type="match status" value="1"/>
</dbReference>
<dbReference type="PIRSF" id="PIRSF006173">
    <property type="entry name" value="UCP006173"/>
    <property type="match status" value="1"/>
</dbReference>
<sequence>MTARPKKPSPQDGFFWKTKTLEQLSPTEWESLCDGCARCCLEKLEDEDTGRIYFTHVGCRLLDGDACACRDYPNRSDRVPDCVRLTPKEVRELTWLPPSCAYKLVADGRDLYWWHPLISGDPNTVHEAGVSVRGRVERTETEIPVEELEDHIVSWPALLPKRAKLKQRPR</sequence>
<feature type="chain" id="PRO_1000131629" description="UPF0260 protein Rpal_2074">
    <location>
        <begin position="1"/>
        <end position="170"/>
    </location>
</feature>
<protein>
    <recommendedName>
        <fullName evidence="1">UPF0260 protein Rpal_2074</fullName>
    </recommendedName>
</protein>
<accession>B3QAR0</accession>
<name>Y2074_RHOPT</name>
<gene>
    <name type="ordered locus">Rpal_2074</name>
</gene>
<evidence type="ECO:0000255" key="1">
    <source>
        <dbReference type="HAMAP-Rule" id="MF_00676"/>
    </source>
</evidence>
<comment type="similarity">
    <text evidence="1">Belongs to the UPF0260 family.</text>
</comment>
<proteinExistence type="inferred from homology"/>